<name>ATT_APLDE</name>
<organism>
    <name type="scientific">Aplysia depilans</name>
    <name type="common">Sea hare</name>
    <dbReference type="NCBI Taxonomy" id="76186"/>
    <lineage>
        <taxon>Eukaryota</taxon>
        <taxon>Metazoa</taxon>
        <taxon>Spiralia</taxon>
        <taxon>Lophotrochozoa</taxon>
        <taxon>Mollusca</taxon>
        <taxon>Gastropoda</taxon>
        <taxon>Heterobranchia</taxon>
        <taxon>Euthyneura</taxon>
        <taxon>Tectipleura</taxon>
        <taxon>Aplysiida</taxon>
        <taxon>Aplysioidea</taxon>
        <taxon>Aplysiidae</taxon>
        <taxon>Aplysia</taxon>
    </lineage>
</organism>
<proteinExistence type="evidence at protein level"/>
<reference key="1">
    <citation type="submission" date="2002-09" db="PIR data bank">
        <authorList>
            <person name="Nagle G.T."/>
        </authorList>
    </citation>
    <scope>PROTEIN SEQUENCE</scope>
    <scope>DISULFIDE BONDS</scope>
    <scope>GLYCOSYLATION AT ASN-25</scope>
    <source>
        <tissue>Albumen gland</tissue>
    </source>
</reference>
<evidence type="ECO:0000250" key="1"/>
<evidence type="ECO:0000269" key="2">
    <source ref="1"/>
</evidence>
<comment type="function">
    <text evidence="1">Water-borne pheromone that attract the marine mollusk Aplysia into breeding aggregations and coordinate male and female reproductive behavior within the aggregation.</text>
</comment>
<comment type="subcellular location">
    <subcellularLocation>
        <location evidence="1">Secreted</location>
    </subcellularLocation>
</comment>
<comment type="tissue specificity">
    <text>Produced by the albumen gland of the egg cordons.</text>
</comment>
<sequence>NNKCDLEFASSECQMRYQDCGEASNCTALIEECKTSLQEECDQASSESSSTTIRPE</sequence>
<keyword id="KW-0903">Direct protein sequencing</keyword>
<keyword id="KW-1015">Disulfide bond</keyword>
<keyword id="KW-0325">Glycoprotein</keyword>
<keyword id="KW-0588">Pheromone</keyword>
<keyword id="KW-0964">Secreted</keyword>
<feature type="chain" id="PRO_0000064744" description="Attractin">
    <location>
        <begin position="1"/>
        <end position="56"/>
    </location>
</feature>
<feature type="glycosylation site" description="N-linked (GlcNAc...) asparagine" evidence="2">
    <location>
        <position position="25"/>
    </location>
</feature>
<feature type="disulfide bond" evidence="2">
    <location>
        <begin position="4"/>
        <end position="41"/>
    </location>
</feature>
<feature type="disulfide bond" evidence="2">
    <location>
        <begin position="13"/>
        <end position="33"/>
    </location>
</feature>
<feature type="disulfide bond" evidence="2">
    <location>
        <begin position="20"/>
        <end position="26"/>
    </location>
</feature>
<protein>
    <recommendedName>
        <fullName>Attractin</fullName>
    </recommendedName>
</protein>
<gene>
    <name type="primary">ATT</name>
</gene>
<dbReference type="PIR" id="A59446">
    <property type="entry name" value="A59446"/>
</dbReference>
<dbReference type="SMR" id="Q7M460"/>
<dbReference type="GlyCosmos" id="Q7M460">
    <property type="glycosylation" value="1 site, No reported glycans"/>
</dbReference>
<dbReference type="GO" id="GO:0005576">
    <property type="term" value="C:extracellular region"/>
    <property type="evidence" value="ECO:0007669"/>
    <property type="project" value="UniProtKB-SubCell"/>
</dbReference>
<dbReference type="GO" id="GO:0000772">
    <property type="term" value="F:mating pheromone activity"/>
    <property type="evidence" value="ECO:0007669"/>
    <property type="project" value="InterPro"/>
</dbReference>
<dbReference type="GO" id="GO:0019953">
    <property type="term" value="P:sexual reproduction"/>
    <property type="evidence" value="ECO:0007669"/>
    <property type="project" value="InterPro"/>
</dbReference>
<dbReference type="Gene3D" id="1.20.1400.10">
    <property type="entry name" value="Attractin"/>
    <property type="match status" value="1"/>
</dbReference>
<dbReference type="InterPro" id="IPR012529">
    <property type="entry name" value="Attractin"/>
</dbReference>
<dbReference type="InterPro" id="IPR036585">
    <property type="entry name" value="Attractin_sf"/>
</dbReference>
<dbReference type="Pfam" id="PF08037">
    <property type="entry name" value="Attractin"/>
    <property type="match status" value="1"/>
</dbReference>
<dbReference type="SUPFAM" id="SSF90183">
    <property type="entry name" value="Mollusk pheromone"/>
    <property type="match status" value="1"/>
</dbReference>
<accession>Q7M460</accession>